<dbReference type="EC" id="5.3.1.1" evidence="1"/>
<dbReference type="EMBL" id="AP008971">
    <property type="protein sequence ID" value="BAG08209.1"/>
    <property type="molecule type" value="Genomic_DNA"/>
</dbReference>
<dbReference type="RefSeq" id="WP_012290630.1">
    <property type="nucleotide sequence ID" value="NC_010376.1"/>
</dbReference>
<dbReference type="SMR" id="B0S1G9"/>
<dbReference type="STRING" id="334413.FMG_0791"/>
<dbReference type="KEGG" id="fma:FMG_0791"/>
<dbReference type="eggNOG" id="COG0149">
    <property type="taxonomic scope" value="Bacteria"/>
</dbReference>
<dbReference type="HOGENOM" id="CLU_024251_2_3_9"/>
<dbReference type="UniPathway" id="UPA00109">
    <property type="reaction ID" value="UER00189"/>
</dbReference>
<dbReference type="UniPathway" id="UPA00138"/>
<dbReference type="Proteomes" id="UP000001319">
    <property type="component" value="Chromosome"/>
</dbReference>
<dbReference type="GO" id="GO:0005829">
    <property type="term" value="C:cytosol"/>
    <property type="evidence" value="ECO:0007669"/>
    <property type="project" value="TreeGrafter"/>
</dbReference>
<dbReference type="GO" id="GO:0004807">
    <property type="term" value="F:triose-phosphate isomerase activity"/>
    <property type="evidence" value="ECO:0007669"/>
    <property type="project" value="UniProtKB-UniRule"/>
</dbReference>
<dbReference type="GO" id="GO:0006094">
    <property type="term" value="P:gluconeogenesis"/>
    <property type="evidence" value="ECO:0007669"/>
    <property type="project" value="UniProtKB-UniRule"/>
</dbReference>
<dbReference type="GO" id="GO:0046166">
    <property type="term" value="P:glyceraldehyde-3-phosphate biosynthetic process"/>
    <property type="evidence" value="ECO:0007669"/>
    <property type="project" value="TreeGrafter"/>
</dbReference>
<dbReference type="GO" id="GO:0019563">
    <property type="term" value="P:glycerol catabolic process"/>
    <property type="evidence" value="ECO:0007669"/>
    <property type="project" value="TreeGrafter"/>
</dbReference>
<dbReference type="GO" id="GO:0006096">
    <property type="term" value="P:glycolytic process"/>
    <property type="evidence" value="ECO:0007669"/>
    <property type="project" value="UniProtKB-UniRule"/>
</dbReference>
<dbReference type="CDD" id="cd00311">
    <property type="entry name" value="TIM"/>
    <property type="match status" value="1"/>
</dbReference>
<dbReference type="FunFam" id="3.20.20.70:FF:000016">
    <property type="entry name" value="Triosephosphate isomerase"/>
    <property type="match status" value="1"/>
</dbReference>
<dbReference type="Gene3D" id="3.20.20.70">
    <property type="entry name" value="Aldolase class I"/>
    <property type="match status" value="1"/>
</dbReference>
<dbReference type="HAMAP" id="MF_00147_B">
    <property type="entry name" value="TIM_B"/>
    <property type="match status" value="1"/>
</dbReference>
<dbReference type="InterPro" id="IPR013785">
    <property type="entry name" value="Aldolase_TIM"/>
</dbReference>
<dbReference type="InterPro" id="IPR035990">
    <property type="entry name" value="TIM_sf"/>
</dbReference>
<dbReference type="InterPro" id="IPR022896">
    <property type="entry name" value="TrioseP_Isoase_bac/euk"/>
</dbReference>
<dbReference type="InterPro" id="IPR000652">
    <property type="entry name" value="Triosephosphate_isomerase"/>
</dbReference>
<dbReference type="InterPro" id="IPR020861">
    <property type="entry name" value="Triosephosphate_isomerase_AS"/>
</dbReference>
<dbReference type="NCBIfam" id="TIGR00419">
    <property type="entry name" value="tim"/>
    <property type="match status" value="1"/>
</dbReference>
<dbReference type="PANTHER" id="PTHR21139">
    <property type="entry name" value="TRIOSEPHOSPHATE ISOMERASE"/>
    <property type="match status" value="1"/>
</dbReference>
<dbReference type="PANTHER" id="PTHR21139:SF42">
    <property type="entry name" value="TRIOSEPHOSPHATE ISOMERASE"/>
    <property type="match status" value="1"/>
</dbReference>
<dbReference type="Pfam" id="PF00121">
    <property type="entry name" value="TIM"/>
    <property type="match status" value="1"/>
</dbReference>
<dbReference type="SUPFAM" id="SSF51351">
    <property type="entry name" value="Triosephosphate isomerase (TIM)"/>
    <property type="match status" value="1"/>
</dbReference>
<dbReference type="PROSITE" id="PS00171">
    <property type="entry name" value="TIM_1"/>
    <property type="match status" value="1"/>
</dbReference>
<dbReference type="PROSITE" id="PS51440">
    <property type="entry name" value="TIM_2"/>
    <property type="match status" value="1"/>
</dbReference>
<gene>
    <name evidence="1" type="primary">tpiA</name>
    <name type="ordered locus">FMG_0791</name>
</gene>
<reference key="1">
    <citation type="journal article" date="2008" name="DNA Res.">
        <title>Complete genome sequence of Finegoldia magna, an anaerobic opportunistic pathogen.</title>
        <authorList>
            <person name="Goto T."/>
            <person name="Yamashita A."/>
            <person name="Hirakawa H."/>
            <person name="Matsutani M."/>
            <person name="Todo K."/>
            <person name="Ohshima K."/>
            <person name="Toh H."/>
            <person name="Miyamoto K."/>
            <person name="Kuhara S."/>
            <person name="Hattori M."/>
            <person name="Shimizu T."/>
            <person name="Akimoto S."/>
        </authorList>
    </citation>
    <scope>NUCLEOTIDE SEQUENCE [LARGE SCALE GENOMIC DNA]</scope>
    <source>
        <strain>ATCC 29328 / DSM 20472 / WAL 2508</strain>
    </source>
</reference>
<accession>B0S1G9</accession>
<proteinExistence type="inferred from homology"/>
<organism>
    <name type="scientific">Finegoldia magna (strain ATCC 29328 / DSM 20472 / WAL 2508)</name>
    <name type="common">Peptostreptococcus magnus</name>
    <dbReference type="NCBI Taxonomy" id="334413"/>
    <lineage>
        <taxon>Bacteria</taxon>
        <taxon>Bacillati</taxon>
        <taxon>Bacillota</taxon>
        <taxon>Tissierellia</taxon>
        <taxon>Tissierellales</taxon>
        <taxon>Peptoniphilaceae</taxon>
        <taxon>Finegoldia</taxon>
    </lineage>
</organism>
<protein>
    <recommendedName>
        <fullName evidence="1">Triosephosphate isomerase</fullName>
        <shortName evidence="1">TIM</shortName>
        <shortName evidence="1">TPI</shortName>
        <ecNumber evidence="1">5.3.1.1</ecNumber>
    </recommendedName>
    <alternativeName>
        <fullName evidence="1">Triose-phosphate isomerase</fullName>
    </alternativeName>
</protein>
<comment type="function">
    <text evidence="1">Involved in the gluconeogenesis. Catalyzes stereospecifically the conversion of dihydroxyacetone phosphate (DHAP) to D-glyceraldehyde-3-phosphate (G3P).</text>
</comment>
<comment type="catalytic activity">
    <reaction evidence="1">
        <text>D-glyceraldehyde 3-phosphate = dihydroxyacetone phosphate</text>
        <dbReference type="Rhea" id="RHEA:18585"/>
        <dbReference type="ChEBI" id="CHEBI:57642"/>
        <dbReference type="ChEBI" id="CHEBI:59776"/>
        <dbReference type="EC" id="5.3.1.1"/>
    </reaction>
</comment>
<comment type="pathway">
    <text evidence="1">Carbohydrate biosynthesis; gluconeogenesis.</text>
</comment>
<comment type="pathway">
    <text evidence="1">Carbohydrate degradation; glycolysis; D-glyceraldehyde 3-phosphate from glycerone phosphate: step 1/1.</text>
</comment>
<comment type="subunit">
    <text evidence="1">Homodimer.</text>
</comment>
<comment type="subcellular location">
    <subcellularLocation>
        <location evidence="1">Cytoplasm</location>
    </subcellularLocation>
</comment>
<comment type="similarity">
    <text evidence="1">Belongs to the triosephosphate isomerase family.</text>
</comment>
<name>TPIS_FINM2</name>
<sequence length="251" mass="28026">MRKPLIAGNWKMNKTDGETKQFINDLKCLDISDNVEACIISPFTSLKTLTEDLRNSNISTGAQNMYYEECGAFTGEVSPNMLKDLGIDYVIIGHSERRTIFKEDDELLNKKIASALKHDIKPILCCGENLEQRESNRHEEVVESQIRLDLKGINEKDIMSKLVIAYEPIWAIGTGKTASSDDAQSMCKFIRNLLSKMYSKDLADSVRIQYGGSVKPENILDIMSKEDIDGALVGGASLEAESFSKLINYGK</sequence>
<evidence type="ECO:0000255" key="1">
    <source>
        <dbReference type="HAMAP-Rule" id="MF_00147"/>
    </source>
</evidence>
<feature type="chain" id="PRO_1000096499" description="Triosephosphate isomerase">
    <location>
        <begin position="1"/>
        <end position="251"/>
    </location>
</feature>
<feature type="active site" description="Electrophile" evidence="1">
    <location>
        <position position="94"/>
    </location>
</feature>
<feature type="active site" description="Proton acceptor" evidence="1">
    <location>
        <position position="167"/>
    </location>
</feature>
<feature type="binding site" evidence="1">
    <location>
        <begin position="9"/>
        <end position="11"/>
    </location>
    <ligand>
        <name>substrate</name>
    </ligand>
</feature>
<feature type="binding site" evidence="1">
    <location>
        <position position="173"/>
    </location>
    <ligand>
        <name>substrate</name>
    </ligand>
</feature>
<feature type="binding site" evidence="1">
    <location>
        <position position="213"/>
    </location>
    <ligand>
        <name>substrate</name>
    </ligand>
</feature>
<feature type="binding site" evidence="1">
    <location>
        <begin position="234"/>
        <end position="235"/>
    </location>
    <ligand>
        <name>substrate</name>
    </ligand>
</feature>
<keyword id="KW-0963">Cytoplasm</keyword>
<keyword id="KW-0312">Gluconeogenesis</keyword>
<keyword id="KW-0324">Glycolysis</keyword>
<keyword id="KW-0413">Isomerase</keyword>
<keyword id="KW-1185">Reference proteome</keyword>